<evidence type="ECO:0000250" key="1">
    <source>
        <dbReference type="UniProtKB" id="P07850"/>
    </source>
</evidence>
<evidence type="ECO:0000250" key="2">
    <source>
        <dbReference type="UniProtKB" id="P51687"/>
    </source>
</evidence>
<evidence type="ECO:0000255" key="3">
    <source>
        <dbReference type="PROSITE-ProRule" id="PRU00279"/>
    </source>
</evidence>
<evidence type="ECO:0000269" key="4">
    <source>
    </source>
</evidence>
<evidence type="ECO:0000269" key="5">
    <source>
    </source>
</evidence>
<evidence type="ECO:0000303" key="6">
    <source>
    </source>
</evidence>
<evidence type="ECO:0000305" key="7"/>
<evidence type="ECO:0000305" key="8">
    <source>
    </source>
</evidence>
<evidence type="ECO:0000312" key="9">
    <source>
        <dbReference type="RGD" id="619994"/>
    </source>
</evidence>
<protein>
    <recommendedName>
        <fullName evidence="6">Sulfite oxidase, mitochondrial</fullName>
        <ecNumber evidence="8">1.8.3.1</ecNumber>
    </recommendedName>
</protein>
<keyword id="KW-0903">Direct protein sequencing</keyword>
<keyword id="KW-0349">Heme</keyword>
<keyword id="KW-0408">Iron</keyword>
<keyword id="KW-0479">Metal-binding</keyword>
<keyword id="KW-0496">Mitochondrion</keyword>
<keyword id="KW-0500">Molybdenum</keyword>
<keyword id="KW-0560">Oxidoreductase</keyword>
<keyword id="KW-0597">Phosphoprotein</keyword>
<keyword id="KW-1185">Reference proteome</keyword>
<keyword id="KW-0809">Transit peptide</keyword>
<comment type="function">
    <text evidence="5">Catalyzes the oxidation of sulfite to sulfate, the terminal reaction in the oxidative degradation of sulfur-containing amino acids.</text>
</comment>
<comment type="catalytic activity">
    <reaction evidence="8">
        <text>sulfite + O2 + H2O = sulfate + H2O2</text>
        <dbReference type="Rhea" id="RHEA:24600"/>
        <dbReference type="ChEBI" id="CHEBI:15377"/>
        <dbReference type="ChEBI" id="CHEBI:15379"/>
        <dbReference type="ChEBI" id="CHEBI:16189"/>
        <dbReference type="ChEBI" id="CHEBI:16240"/>
        <dbReference type="ChEBI" id="CHEBI:17359"/>
        <dbReference type="EC" id="1.8.3.1"/>
    </reaction>
    <physiologicalReaction direction="left-to-right" evidence="8">
        <dbReference type="Rhea" id="RHEA:24601"/>
    </physiologicalReaction>
</comment>
<comment type="cofactor">
    <cofactor evidence="5">
        <name>heme b</name>
        <dbReference type="ChEBI" id="CHEBI:60344"/>
    </cofactor>
    <text evidence="5">Binds 1 heme b (iron(II)-protoporphyrin IX) group non-covalently per subunit.</text>
</comment>
<comment type="cofactor">
    <cofactor evidence="5">
        <name>Mo-molybdopterin</name>
        <dbReference type="ChEBI" id="CHEBI:71302"/>
    </cofactor>
    <text evidence="5">Binds 1 Mo-molybdopterin (Mo-MPT) cofactor per subunit.</text>
</comment>
<comment type="pathway">
    <text evidence="5">Energy metabolism; sulfur metabolism.</text>
</comment>
<comment type="subunit">
    <text evidence="5">Homodimer.</text>
</comment>
<comment type="subcellular location">
    <subcellularLocation>
        <location evidence="4 5">Mitochondrion intermembrane space</location>
    </subcellularLocation>
</comment>
<comment type="sequence caution" evidence="7">
    <conflict type="erroneous initiation">
        <sequence resource="EMBL-CDS" id="AAA16618"/>
    </conflict>
    <text>Truncated N-terminus.</text>
</comment>
<reference key="1">
    <citation type="journal article" date="2004" name="Genome Res.">
        <title>The status, quality, and expansion of the NIH full-length cDNA project: the Mammalian Gene Collection (MGC).</title>
        <authorList>
            <consortium name="The MGC Project Team"/>
        </authorList>
    </citation>
    <scope>NUCLEOTIDE SEQUENCE [LARGE SCALE MRNA]</scope>
    <source>
        <tissue>Prostate</tissue>
    </source>
</reference>
<reference key="2">
    <citation type="journal article" date="1994" name="J. Biol. Chem.">
        <title>Molecular cloning of rat liver sulfite oxidase. Expression of a eukaryotic Mo-pterin-containing enzyme in Escherichia coli.</title>
        <authorList>
            <person name="Garrett R.M."/>
            <person name="Rajagopalan K.V."/>
        </authorList>
    </citation>
    <scope>NUCLEOTIDE SEQUENCE [MRNA] OF 43-546</scope>
    <scope>FUNCTION</scope>
    <scope>CATALYTIC ACTIVITY</scope>
    <scope>SUBCELLULAR LOCATION</scope>
    <scope>COFACTOR</scope>
    <source>
        <tissue>Liver</tissue>
    </source>
</reference>
<reference key="3">
    <citation type="journal article" date="1990" name="J. Biol. Chem.">
        <title>A conserved cysteine in molybdenum oxotransferases.</title>
        <authorList>
            <person name="Barber M.J."/>
            <person name="Neame P.J."/>
        </authorList>
    </citation>
    <scope>PROTEIN SEQUENCE OF 98-253; 256-275; 280-433; 485-495 AND 503-537</scope>
    <source>
        <tissue>Liver</tissue>
    </source>
</reference>
<reference key="4">
    <citation type="journal article" date="1988" name="Proc. Natl. Acad. Sci. U.S.A.">
        <title>Sequence and nitrate regulation of the Arabidopsis thaliana mRNA encoding nitrate reductase, a metalloflavoprotein with three functional domains.</title>
        <authorList>
            <person name="Crawford N.M."/>
            <person name="Smith M."/>
            <person name="Bellissimo D.B."/>
            <person name="Davis R.W."/>
        </authorList>
    </citation>
    <scope>PROTEIN SEQUENCE OF 187-201 AND 340-368</scope>
    <source>
        <tissue>Liver</tissue>
    </source>
</reference>
<reference key="5">
    <citation type="journal article" date="1982" name="Biochem. Biophys. Res. Commun.">
        <title>Evidence for participation of the inner membrane in the import of sulfite oxidase into the intermembrane space of liver mitochondria.</title>
        <authorList>
            <person name="Ono H."/>
            <person name="Ito A."/>
        </authorList>
    </citation>
    <scope>SUBCELLULAR LOCATION</scope>
</reference>
<reference key="6">
    <citation type="submission" date="2008-12" db="UniProtKB">
        <authorList>
            <person name="Maurya D.K."/>
            <person name="Bhargava P."/>
        </authorList>
    </citation>
    <scope>IDENTIFICATION BY MASS SPECTROMETRY</scope>
</reference>
<dbReference type="EC" id="1.8.3.1" evidence="8"/>
<dbReference type="EMBL" id="BC061991">
    <property type="protein sequence ID" value="AAH61991.2"/>
    <property type="molecule type" value="mRNA"/>
</dbReference>
<dbReference type="EMBL" id="L05084">
    <property type="protein sequence ID" value="AAA16618.1"/>
    <property type="status" value="ALT_INIT"/>
    <property type="molecule type" value="mRNA"/>
</dbReference>
<dbReference type="PIR" id="A53107">
    <property type="entry name" value="A53107"/>
</dbReference>
<dbReference type="RefSeq" id="NP_112389.3">
    <property type="nucleotide sequence ID" value="NM_031127.3"/>
</dbReference>
<dbReference type="SMR" id="Q07116"/>
<dbReference type="FunCoup" id="Q07116">
    <property type="interactions" value="1631"/>
</dbReference>
<dbReference type="STRING" id="10116.ENSRNOP00000008018"/>
<dbReference type="CarbonylDB" id="Q07116"/>
<dbReference type="iPTMnet" id="Q07116"/>
<dbReference type="PhosphoSitePlus" id="Q07116"/>
<dbReference type="jPOST" id="Q07116"/>
<dbReference type="PaxDb" id="10116-ENSRNOP00000008018"/>
<dbReference type="GeneID" id="81805"/>
<dbReference type="KEGG" id="rno:81805"/>
<dbReference type="UCSC" id="RGD:619994">
    <property type="organism name" value="rat"/>
</dbReference>
<dbReference type="AGR" id="RGD:619994"/>
<dbReference type="CTD" id="6821"/>
<dbReference type="RGD" id="619994">
    <property type="gene designation" value="Suox"/>
</dbReference>
<dbReference type="eggNOG" id="KOG0535">
    <property type="taxonomic scope" value="Eukaryota"/>
</dbReference>
<dbReference type="eggNOG" id="KOG4576">
    <property type="taxonomic scope" value="Eukaryota"/>
</dbReference>
<dbReference type="InParanoid" id="Q07116"/>
<dbReference type="PhylomeDB" id="Q07116"/>
<dbReference type="Reactome" id="R-RNO-1614517">
    <property type="pathway name" value="Sulfide oxidation to sulfate"/>
</dbReference>
<dbReference type="UniPathway" id="UPA00096"/>
<dbReference type="PRO" id="PR:Q07116"/>
<dbReference type="Proteomes" id="UP000002494">
    <property type="component" value="Unplaced"/>
</dbReference>
<dbReference type="GO" id="GO:0005758">
    <property type="term" value="C:mitochondrial intermembrane space"/>
    <property type="evidence" value="ECO:0007669"/>
    <property type="project" value="UniProtKB-SubCell"/>
</dbReference>
<dbReference type="GO" id="GO:0005739">
    <property type="term" value="C:mitochondrion"/>
    <property type="evidence" value="ECO:0000318"/>
    <property type="project" value="GO_Central"/>
</dbReference>
<dbReference type="GO" id="GO:0020037">
    <property type="term" value="F:heme binding"/>
    <property type="evidence" value="ECO:0000314"/>
    <property type="project" value="RGD"/>
</dbReference>
<dbReference type="GO" id="GO:0030151">
    <property type="term" value="F:molybdenum ion binding"/>
    <property type="evidence" value="ECO:0007669"/>
    <property type="project" value="InterPro"/>
</dbReference>
<dbReference type="GO" id="GO:0043546">
    <property type="term" value="F:molybdopterin cofactor binding"/>
    <property type="evidence" value="ECO:0000314"/>
    <property type="project" value="RGD"/>
</dbReference>
<dbReference type="GO" id="GO:0008482">
    <property type="term" value="F:sulfite oxidase activity"/>
    <property type="evidence" value="ECO:0000314"/>
    <property type="project" value="RGD"/>
</dbReference>
<dbReference type="GO" id="GO:0007584">
    <property type="term" value="P:response to nutrient"/>
    <property type="evidence" value="ECO:0000314"/>
    <property type="project" value="RGD"/>
</dbReference>
<dbReference type="GO" id="GO:0006790">
    <property type="term" value="P:sulfur compound metabolic process"/>
    <property type="evidence" value="ECO:0000318"/>
    <property type="project" value="GO_Central"/>
</dbReference>
<dbReference type="CDD" id="cd02111">
    <property type="entry name" value="eukary_SO_Moco"/>
    <property type="match status" value="1"/>
</dbReference>
<dbReference type="FunFam" id="2.60.40.650:FF:000003">
    <property type="entry name" value="Sulfite oxidase, mitochondrial"/>
    <property type="match status" value="1"/>
</dbReference>
<dbReference type="FunFam" id="3.10.120.10:FF:000007">
    <property type="entry name" value="Sulfite oxidase, mitochondrial"/>
    <property type="match status" value="1"/>
</dbReference>
<dbReference type="FunFam" id="3.90.420.10:FF:000002">
    <property type="entry name" value="sulfite oxidase, mitochondrial"/>
    <property type="match status" value="1"/>
</dbReference>
<dbReference type="Gene3D" id="2.60.40.650">
    <property type="match status" value="1"/>
</dbReference>
<dbReference type="Gene3D" id="3.10.120.10">
    <property type="entry name" value="Cytochrome b5-like heme/steroid binding domain"/>
    <property type="match status" value="1"/>
</dbReference>
<dbReference type="Gene3D" id="3.90.420.10">
    <property type="entry name" value="Oxidoreductase, molybdopterin-binding domain"/>
    <property type="match status" value="1"/>
</dbReference>
<dbReference type="InterPro" id="IPR001199">
    <property type="entry name" value="Cyt_B5-like_heme/steroid-bd"/>
</dbReference>
<dbReference type="InterPro" id="IPR036400">
    <property type="entry name" value="Cyt_B5-like_heme/steroid_sf"/>
</dbReference>
<dbReference type="InterPro" id="IPR018506">
    <property type="entry name" value="Cyt_B5_heme-BS"/>
</dbReference>
<dbReference type="InterPro" id="IPR014756">
    <property type="entry name" value="Ig_E-set"/>
</dbReference>
<dbReference type="InterPro" id="IPR005066">
    <property type="entry name" value="MoCF_OxRdtse_dimer"/>
</dbReference>
<dbReference type="InterPro" id="IPR008335">
    <property type="entry name" value="Mopterin_OxRdtase_euk"/>
</dbReference>
<dbReference type="InterPro" id="IPR000572">
    <property type="entry name" value="OxRdtase_Mopterin-bd_dom"/>
</dbReference>
<dbReference type="InterPro" id="IPR036374">
    <property type="entry name" value="OxRdtase_Mopterin-bd_sf"/>
</dbReference>
<dbReference type="InterPro" id="IPR022407">
    <property type="entry name" value="OxRdtase_Mopterin_BS"/>
</dbReference>
<dbReference type="PANTHER" id="PTHR19372:SF7">
    <property type="entry name" value="SULFITE OXIDASE, MITOCHONDRIAL"/>
    <property type="match status" value="1"/>
</dbReference>
<dbReference type="PANTHER" id="PTHR19372">
    <property type="entry name" value="SULFITE REDUCTASE"/>
    <property type="match status" value="1"/>
</dbReference>
<dbReference type="Pfam" id="PF00173">
    <property type="entry name" value="Cyt-b5"/>
    <property type="match status" value="1"/>
</dbReference>
<dbReference type="Pfam" id="PF03404">
    <property type="entry name" value="Mo-co_dimer"/>
    <property type="match status" value="1"/>
</dbReference>
<dbReference type="Pfam" id="PF00174">
    <property type="entry name" value="Oxidored_molyb"/>
    <property type="match status" value="1"/>
</dbReference>
<dbReference type="PRINTS" id="PR00363">
    <property type="entry name" value="CYTOCHROMEB5"/>
</dbReference>
<dbReference type="PRINTS" id="PR00407">
    <property type="entry name" value="EUMOPTERIN"/>
</dbReference>
<dbReference type="SMART" id="SM01117">
    <property type="entry name" value="Cyt-b5"/>
    <property type="match status" value="1"/>
</dbReference>
<dbReference type="SUPFAM" id="SSF55856">
    <property type="entry name" value="Cytochrome b5-like heme/steroid binding domain"/>
    <property type="match status" value="1"/>
</dbReference>
<dbReference type="SUPFAM" id="SSF81296">
    <property type="entry name" value="E set domains"/>
    <property type="match status" value="1"/>
</dbReference>
<dbReference type="SUPFAM" id="SSF56524">
    <property type="entry name" value="Oxidoreductase molybdopterin-binding domain"/>
    <property type="match status" value="1"/>
</dbReference>
<dbReference type="PROSITE" id="PS00191">
    <property type="entry name" value="CYTOCHROME_B5_1"/>
    <property type="match status" value="1"/>
</dbReference>
<dbReference type="PROSITE" id="PS50255">
    <property type="entry name" value="CYTOCHROME_B5_2"/>
    <property type="match status" value="1"/>
</dbReference>
<dbReference type="PROSITE" id="PS00559">
    <property type="entry name" value="MOLYBDOPTERIN_EUK"/>
    <property type="match status" value="1"/>
</dbReference>
<proteinExistence type="evidence at protein level"/>
<feature type="transit peptide" description="Mitochondrion" evidence="5">
    <location>
        <begin position="1"/>
        <end position="80"/>
    </location>
</feature>
<feature type="chain" id="PRO_0000006484" description="Sulfite oxidase, mitochondrial">
    <location>
        <begin position="81"/>
        <end position="546"/>
    </location>
</feature>
<feature type="domain" description="Cytochrome b5 heme-binding" evidence="3">
    <location>
        <begin position="83"/>
        <end position="162"/>
    </location>
</feature>
<feature type="region of interest" description="Hinge" evidence="1">
    <location>
        <begin position="166"/>
        <end position="175"/>
    </location>
</feature>
<feature type="region of interest" description="Moco domain" evidence="1">
    <location>
        <begin position="176"/>
        <end position="402"/>
    </location>
</feature>
<feature type="region of interest" description="Homodimerization" evidence="1">
    <location>
        <begin position="403"/>
        <end position="539"/>
    </location>
</feature>
<feature type="binding site" description="axial binding residue" evidence="3">
    <location>
        <position position="119"/>
    </location>
    <ligand>
        <name>heme b</name>
        <dbReference type="ChEBI" id="CHEBI:60344"/>
    </ligand>
    <ligandPart>
        <name>Fe</name>
        <dbReference type="ChEBI" id="CHEBI:18248"/>
    </ligandPart>
</feature>
<feature type="binding site" description="axial binding residue" evidence="3">
    <location>
        <position position="144"/>
    </location>
    <ligand>
        <name>heme b</name>
        <dbReference type="ChEBI" id="CHEBI:60344"/>
    </ligand>
    <ligandPart>
        <name>Fe</name>
        <dbReference type="ChEBI" id="CHEBI:18248"/>
    </ligandPart>
</feature>
<feature type="binding site" evidence="2">
    <location>
        <position position="146"/>
    </location>
    <ligand>
        <name>heme b</name>
        <dbReference type="ChEBI" id="CHEBI:60344"/>
    </ligand>
</feature>
<feature type="binding site" evidence="1">
    <location>
        <position position="148"/>
    </location>
    <ligand>
        <name>heme b</name>
        <dbReference type="ChEBI" id="CHEBI:60344"/>
    </ligand>
</feature>
<feature type="binding site" evidence="1">
    <location>
        <begin position="216"/>
        <end position="220"/>
    </location>
    <ligand>
        <name>Mo-molybdopterin</name>
        <dbReference type="ChEBI" id="CHEBI:71302"/>
    </ligand>
</feature>
<feature type="binding site" evidence="1">
    <location>
        <position position="265"/>
    </location>
    <ligand>
        <name>Mo-molybdopterin</name>
        <dbReference type="ChEBI" id="CHEBI:71302"/>
    </ligand>
    <ligandPart>
        <name>Mo</name>
        <dbReference type="ChEBI" id="CHEBI:28685"/>
    </ligandPart>
</feature>
<feature type="binding site" evidence="1">
    <location>
        <position position="323"/>
    </location>
    <ligand>
        <name>Mo-molybdopterin</name>
        <dbReference type="ChEBI" id="CHEBI:71302"/>
    </ligand>
</feature>
<feature type="binding site" evidence="1">
    <location>
        <position position="362"/>
    </location>
    <ligand>
        <name>Mo-molybdopterin</name>
        <dbReference type="ChEBI" id="CHEBI:71302"/>
    </ligand>
</feature>
<feature type="binding site" evidence="1">
    <location>
        <position position="367"/>
    </location>
    <ligand>
        <name>Mo-molybdopterin</name>
        <dbReference type="ChEBI" id="CHEBI:71302"/>
    </ligand>
</feature>
<feature type="binding site" evidence="1">
    <location>
        <begin position="378"/>
        <end position="380"/>
    </location>
    <ligand>
        <name>Mo-molybdopterin</name>
        <dbReference type="ChEBI" id="CHEBI:71302"/>
    </ligand>
</feature>
<feature type="modified residue" description="Phosphoserine" evidence="2">
    <location>
        <position position="124"/>
    </location>
</feature>
<feature type="sequence conflict" description="In Ref. 2; AAA16618." evidence="7" ref="2">
    <original>K</original>
    <variation>Q</variation>
    <location>
        <position position="98"/>
    </location>
</feature>
<feature type="sequence conflict" description="In Ref. 3; AA sequence." evidence="7" ref="3">
    <original>S</original>
    <variation>T</variation>
    <location>
        <position position="178"/>
    </location>
</feature>
<feature type="sequence conflict" description="In Ref. 3; AA sequence." evidence="7" ref="3">
    <original>W</original>
    <variation>R</variation>
    <location>
        <position position="294"/>
    </location>
</feature>
<feature type="sequence conflict" description="In Ref. 3; AA sequence." evidence="7" ref="3">
    <original>C</original>
    <variation>Q</variation>
    <location>
        <position position="318"/>
    </location>
</feature>
<feature type="sequence conflict" description="In Ref. 3; AA sequence." evidence="7" ref="3">
    <original>A</original>
    <variation>G</variation>
    <location>
        <position position="338"/>
    </location>
</feature>
<feature type="sequence conflict" description="In Ref. 3; AA sequence and 4; AA sequence." evidence="7" ref="3 4">
    <original>H</original>
    <variation>S</variation>
    <location>
        <position position="362"/>
    </location>
</feature>
<feature type="sequence conflict" description="In Ref. 3; AA sequence." evidence="7" ref="3">
    <original>SHW</original>
    <variation>HYL</variation>
    <location>
        <begin position="394"/>
        <end position="396"/>
    </location>
</feature>
<feature type="sequence conflict" description="In Ref. 3; AA sequence." evidence="7" ref="3">
    <original>Q</original>
    <variation>V</variation>
    <location>
        <position position="432"/>
    </location>
</feature>
<feature type="sequence conflict" description="In Ref. 3; AA sequence." evidence="7" ref="3">
    <original>D</original>
    <variation>A</variation>
    <location>
        <position position="514"/>
    </location>
</feature>
<feature type="sequence conflict" description="In Ref. 3; AA sequence." evidence="7" ref="3">
    <original>W</original>
    <variation>A</variation>
    <location>
        <position position="527"/>
    </location>
</feature>
<sequence length="546" mass="60806">MLPRLYRSVAVGLPRAIRAKSTPLRLCIQACSSSDSLKPQHPSLTFSDDNSRTRGWKVMGTLIGLGAVLAYHDHRCRASQESPRIYSKEDVRSHNNLKTGVWVTLGSEVFDVTKFVDLHPGGQSKLMLAAGGPLEPFWALYAVHNQPHVRELLAEYKIGELNPEDRMSPPLEASDPYSNDPMRHPALRINSQRPFNAEPPPELLTESYITPNPIFFTRNHLPVPNLDPDTYRLHVVGAPGGQSLSLSLDDLHKFPKHEVTVTLQCAGNRRSEMNKVKEVKGLEWRTGAISTARWAGARLCDVLAQAGHRLRETEAHVCFEGLDSDPTGTAYGASIPLARAMDPQAEVLLAYEMNGQPLPRDHGFPVRVVVPGVVGARHVKWLGRVSVESEESYSHWQRRDYKGFSPSVDWDTVDFDLAPSIQELPIQSAITQPQDGTTVESGEVIIKGYAWSGGGRAVIRVDVSMDGGLTWQEAELEGEEQHPRKAWAWRIWQLKAHVPAEQKELNIICKAVDDSYNVQPDTVAPIWNLRGVLSNAWHRVHVQVVP</sequence>
<organism>
    <name type="scientific">Rattus norvegicus</name>
    <name type="common">Rat</name>
    <dbReference type="NCBI Taxonomy" id="10116"/>
    <lineage>
        <taxon>Eukaryota</taxon>
        <taxon>Metazoa</taxon>
        <taxon>Chordata</taxon>
        <taxon>Craniata</taxon>
        <taxon>Vertebrata</taxon>
        <taxon>Euteleostomi</taxon>
        <taxon>Mammalia</taxon>
        <taxon>Eutheria</taxon>
        <taxon>Euarchontoglires</taxon>
        <taxon>Glires</taxon>
        <taxon>Rodentia</taxon>
        <taxon>Myomorpha</taxon>
        <taxon>Muroidea</taxon>
        <taxon>Muridae</taxon>
        <taxon>Murinae</taxon>
        <taxon>Rattus</taxon>
    </lineage>
</organism>
<accession>Q07116</accession>
<accession>Q6P6W0</accession>
<name>SUOX_RAT</name>
<gene>
    <name evidence="9" type="primary">Suox</name>
</gene>